<protein>
    <recommendedName>
        <fullName>Short neurotoxin 1</fullName>
    </recommendedName>
    <alternativeName>
        <fullName>Neurotoxin A</fullName>
    </alternativeName>
</protein>
<organism>
    <name type="scientific">Hydrophis lapemoides</name>
    <name type="common">Persian gulf sea snake</name>
    <name type="synonym">Aturia lapemoides</name>
    <dbReference type="NCBI Taxonomy" id="8684"/>
    <lineage>
        <taxon>Eukaryota</taxon>
        <taxon>Metazoa</taxon>
        <taxon>Chordata</taxon>
        <taxon>Craniata</taxon>
        <taxon>Vertebrata</taxon>
        <taxon>Euteleostomi</taxon>
        <taxon>Lepidosauria</taxon>
        <taxon>Squamata</taxon>
        <taxon>Bifurcata</taxon>
        <taxon>Unidentata</taxon>
        <taxon>Episquamata</taxon>
        <taxon>Toxicofera</taxon>
        <taxon>Serpentes</taxon>
        <taxon>Colubroidea</taxon>
        <taxon>Elapidae</taxon>
        <taxon>Hydrophiinae</taxon>
        <taxon>Hydrophis</taxon>
    </lineage>
</organism>
<reference key="1">
    <citation type="journal article" date="1983" name="Biochem. J.">
        <title>Neurotoxins from the venoms of the sea snakes Hydrophis ornatus and Hydrophis lapemoides.</title>
        <authorList>
            <person name="Tamiya N."/>
            <person name="Maeda N."/>
            <person name="Cogger H.G."/>
        </authorList>
    </citation>
    <scope>PROTEIN SEQUENCE</scope>
    <scope>TOXIC DOSE</scope>
    <scope>SUBCELLULAR LOCATION</scope>
    <source>
        <tissue>Venom</tissue>
    </source>
</reference>
<reference key="2">
    <citation type="journal article" date="2019" name="Biochem. Biophys. Res. Commun.">
        <title>Identification of novel Kv1.3 targeting venom peptides by a single round of autocrine-based selection.</title>
        <authorList>
            <person name="Liu Y."/>
            <person name="Zhang J."/>
            <person name="Wang R."/>
            <person name="Wu Y."/>
            <person name="Wang W."/>
            <person name="Xin X."/>
            <person name="Du M."/>
            <person name="Cao Y."/>
            <person name="Zhang H."/>
        </authorList>
    </citation>
    <scope>FUNCTION</scope>
    <scope>RECOMBINANT EXPRESSION</scope>
</reference>
<evidence type="ECO:0000250" key="1">
    <source>
        <dbReference type="UniProtKB" id="P0C1Z0"/>
    </source>
</evidence>
<evidence type="ECO:0000250" key="2">
    <source>
        <dbReference type="UniProtKB" id="P60775"/>
    </source>
</evidence>
<evidence type="ECO:0000269" key="3">
    <source>
    </source>
</evidence>
<evidence type="ECO:0000269" key="4">
    <source>
    </source>
</evidence>
<evidence type="ECO:0000305" key="5"/>
<comment type="function">
    <text evidence="2 3">Binds to muscle nicotinic acetylcholine receptor (nAChR) and inhibit acetylcholine from binding to the receptor, thereby impairing neuromuscular transmission (By similarity). The recombinant protein also barely blocks voltage-gated potassium channel Kv1.3/KCNA3 (2.71% inhibition at 60 nM of toxin) (PubMed:30648553).</text>
</comment>
<comment type="subcellular location">
    <subcellularLocation>
        <location evidence="4">Secreted</location>
    </subcellularLocation>
</comment>
<comment type="tissue specificity">
    <text evidence="5">Expressed by the venom gland.</text>
</comment>
<comment type="toxic dose">
    <text evidence="4">LD(50) is 0.09 mg/kg by intramuscular injection into mice.</text>
</comment>
<comment type="similarity">
    <text evidence="5">Belongs to the three-finger toxin family. Short-chain subfamily. Type I alpha-neurotoxin sub-subfamily.</text>
</comment>
<accession>P01437</accession>
<name>3S11_HYDLA</name>
<proteinExistence type="evidence at protein level"/>
<sequence length="60" mass="6777">MTCCNQQSSQPKTTTNCAESSCYKKTWRDFRGTRIERGCGCPQVKPGIKLECCHTNECNN</sequence>
<dbReference type="PIR" id="A90321">
    <property type="entry name" value="N1EY1H"/>
</dbReference>
<dbReference type="SMR" id="P01437"/>
<dbReference type="GO" id="GO:0005576">
    <property type="term" value="C:extracellular region"/>
    <property type="evidence" value="ECO:0007669"/>
    <property type="project" value="UniProtKB-SubCell"/>
</dbReference>
<dbReference type="GO" id="GO:0030550">
    <property type="term" value="F:acetylcholine receptor inhibitor activity"/>
    <property type="evidence" value="ECO:0007669"/>
    <property type="project" value="UniProtKB-KW"/>
</dbReference>
<dbReference type="GO" id="GO:0015459">
    <property type="term" value="F:potassium channel regulator activity"/>
    <property type="evidence" value="ECO:0007669"/>
    <property type="project" value="UniProtKB-KW"/>
</dbReference>
<dbReference type="GO" id="GO:0090729">
    <property type="term" value="F:toxin activity"/>
    <property type="evidence" value="ECO:0007669"/>
    <property type="project" value="UniProtKB-KW"/>
</dbReference>
<dbReference type="CDD" id="cd00206">
    <property type="entry name" value="TFP_snake_toxin"/>
    <property type="match status" value="1"/>
</dbReference>
<dbReference type="Gene3D" id="2.10.60.10">
    <property type="entry name" value="CD59"/>
    <property type="match status" value="1"/>
</dbReference>
<dbReference type="InterPro" id="IPR003571">
    <property type="entry name" value="Snake_3FTx"/>
</dbReference>
<dbReference type="InterPro" id="IPR045860">
    <property type="entry name" value="Snake_toxin-like_sf"/>
</dbReference>
<dbReference type="InterPro" id="IPR018354">
    <property type="entry name" value="Snake_toxin_con_site"/>
</dbReference>
<dbReference type="InterPro" id="IPR054131">
    <property type="entry name" value="Toxin_cobra-type"/>
</dbReference>
<dbReference type="Pfam" id="PF21947">
    <property type="entry name" value="Toxin_cobra-type"/>
    <property type="match status" value="1"/>
</dbReference>
<dbReference type="SUPFAM" id="SSF57302">
    <property type="entry name" value="Snake toxin-like"/>
    <property type="match status" value="1"/>
</dbReference>
<dbReference type="PROSITE" id="PS00272">
    <property type="entry name" value="SNAKE_TOXIN"/>
    <property type="match status" value="1"/>
</dbReference>
<feature type="chain" id="PRO_0000093584" description="Short neurotoxin 1" evidence="4">
    <location>
        <begin position="1"/>
        <end position="60"/>
    </location>
</feature>
<feature type="disulfide bond" evidence="1">
    <location>
        <begin position="3"/>
        <end position="22"/>
    </location>
</feature>
<feature type="disulfide bond" evidence="1">
    <location>
        <begin position="17"/>
        <end position="39"/>
    </location>
</feature>
<feature type="disulfide bond" evidence="1">
    <location>
        <begin position="41"/>
        <end position="52"/>
    </location>
</feature>
<feature type="disulfide bond" evidence="1">
    <location>
        <begin position="53"/>
        <end position="58"/>
    </location>
</feature>
<keyword id="KW-0008">Acetylcholine receptor inhibiting toxin</keyword>
<keyword id="KW-0903">Direct protein sequencing</keyword>
<keyword id="KW-1015">Disulfide bond</keyword>
<keyword id="KW-0872">Ion channel impairing toxin</keyword>
<keyword id="KW-0528">Neurotoxin</keyword>
<keyword id="KW-0629">Postsynaptic neurotoxin</keyword>
<keyword id="KW-0632">Potassium channel impairing toxin</keyword>
<keyword id="KW-0964">Secreted</keyword>
<keyword id="KW-0800">Toxin</keyword>
<keyword id="KW-1220">Voltage-gated potassium channel impairing toxin</keyword>